<organism>
    <name type="scientific">Xanthomonas campestris pv. campestris (strain 8004)</name>
    <dbReference type="NCBI Taxonomy" id="314565"/>
    <lineage>
        <taxon>Bacteria</taxon>
        <taxon>Pseudomonadati</taxon>
        <taxon>Pseudomonadota</taxon>
        <taxon>Gammaproteobacteria</taxon>
        <taxon>Lysobacterales</taxon>
        <taxon>Lysobacteraceae</taxon>
        <taxon>Xanthomonas</taxon>
    </lineage>
</organism>
<keyword id="KW-0067">ATP-binding</keyword>
<keyword id="KW-0963">Cytoplasm</keyword>
<keyword id="KW-0329">Glyoxylate bypass</keyword>
<keyword id="KW-0378">Hydrolase</keyword>
<keyword id="KW-0418">Kinase</keyword>
<keyword id="KW-0547">Nucleotide-binding</keyword>
<keyword id="KW-0904">Protein phosphatase</keyword>
<keyword id="KW-0723">Serine/threonine-protein kinase</keyword>
<keyword id="KW-0808">Transferase</keyword>
<keyword id="KW-0816">Tricarboxylic acid cycle</keyword>
<reference key="1">
    <citation type="journal article" date="2005" name="Genome Res.">
        <title>Comparative and functional genomic analyses of the pathogenicity of phytopathogen Xanthomonas campestris pv. campestris.</title>
        <authorList>
            <person name="Qian W."/>
            <person name="Jia Y."/>
            <person name="Ren S.-X."/>
            <person name="He Y.-Q."/>
            <person name="Feng J.-X."/>
            <person name="Lu L.-F."/>
            <person name="Sun Q."/>
            <person name="Ying G."/>
            <person name="Tang D.-J."/>
            <person name="Tang H."/>
            <person name="Wu W."/>
            <person name="Hao P."/>
            <person name="Wang L."/>
            <person name="Jiang B.-L."/>
            <person name="Zeng S."/>
            <person name="Gu W.-Y."/>
            <person name="Lu G."/>
            <person name="Rong L."/>
            <person name="Tian Y."/>
            <person name="Yao Z."/>
            <person name="Fu G."/>
            <person name="Chen B."/>
            <person name="Fang R."/>
            <person name="Qiang B."/>
            <person name="Chen Z."/>
            <person name="Zhao G.-P."/>
            <person name="Tang J.-L."/>
            <person name="He C."/>
        </authorList>
    </citation>
    <scope>NUCLEOTIDE SEQUENCE [LARGE SCALE GENOMIC DNA]</scope>
    <source>
        <strain>8004</strain>
    </source>
</reference>
<comment type="function">
    <text evidence="1">Bifunctional enzyme which can phosphorylate or dephosphorylate isocitrate dehydrogenase (IDH) on a specific serine residue. This is a regulatory mechanism which enables bacteria to bypass the Krebs cycle via the glyoxylate shunt in response to the source of carbon. When bacteria are grown on glucose, IDH is fully active and unphosphorylated, but when grown on acetate or ethanol, the activity of IDH declines drastically concomitant with its phosphorylation.</text>
</comment>
<comment type="catalytic activity">
    <reaction evidence="1">
        <text>L-seryl-[isocitrate dehydrogenase] + ATP = O-phospho-L-seryl-[isocitrate dehydrogenase] + ADP + H(+)</text>
        <dbReference type="Rhea" id="RHEA:43540"/>
        <dbReference type="Rhea" id="RHEA-COMP:10605"/>
        <dbReference type="Rhea" id="RHEA-COMP:10606"/>
        <dbReference type="ChEBI" id="CHEBI:15378"/>
        <dbReference type="ChEBI" id="CHEBI:29999"/>
        <dbReference type="ChEBI" id="CHEBI:30616"/>
        <dbReference type="ChEBI" id="CHEBI:83421"/>
        <dbReference type="ChEBI" id="CHEBI:456216"/>
        <dbReference type="EC" id="2.7.11.5"/>
    </reaction>
</comment>
<comment type="subcellular location">
    <subcellularLocation>
        <location evidence="1">Cytoplasm</location>
    </subcellularLocation>
</comment>
<comment type="similarity">
    <text evidence="1">Belongs to the AceK family.</text>
</comment>
<protein>
    <recommendedName>
        <fullName evidence="1">Isocitrate dehydrogenase kinase/phosphatase</fullName>
        <shortName evidence="1">IDH kinase/phosphatase</shortName>
        <shortName evidence="1">IDHK/P</shortName>
        <ecNumber evidence="1">2.7.11.5</ecNumber>
        <ecNumber evidence="1">3.1.3.-</ecNumber>
    </recommendedName>
</protein>
<name>ACEK_XANC8</name>
<evidence type="ECO:0000255" key="1">
    <source>
        <dbReference type="HAMAP-Rule" id="MF_00747"/>
    </source>
</evidence>
<dbReference type="EC" id="2.7.11.5" evidence="1"/>
<dbReference type="EC" id="3.1.3.-" evidence="1"/>
<dbReference type="EMBL" id="CP000050">
    <property type="protein sequence ID" value="AAY50892.1"/>
    <property type="molecule type" value="Genomic_DNA"/>
</dbReference>
<dbReference type="RefSeq" id="WP_011038861.1">
    <property type="nucleotide sequence ID" value="NZ_CP155948.1"/>
</dbReference>
<dbReference type="SMR" id="Q4UPY1"/>
<dbReference type="KEGG" id="xcb:XC_3852"/>
<dbReference type="HOGENOM" id="CLU_033804_1_1_6"/>
<dbReference type="Proteomes" id="UP000000420">
    <property type="component" value="Chromosome"/>
</dbReference>
<dbReference type="GO" id="GO:0005737">
    <property type="term" value="C:cytoplasm"/>
    <property type="evidence" value="ECO:0007669"/>
    <property type="project" value="UniProtKB-SubCell"/>
</dbReference>
<dbReference type="GO" id="GO:0008772">
    <property type="term" value="F:[isocitrate dehydrogenase (NADP+)] kinase activity"/>
    <property type="evidence" value="ECO:0007669"/>
    <property type="project" value="UniProtKB-UniRule"/>
</dbReference>
<dbReference type="GO" id="GO:0016208">
    <property type="term" value="F:AMP binding"/>
    <property type="evidence" value="ECO:0007669"/>
    <property type="project" value="TreeGrafter"/>
</dbReference>
<dbReference type="GO" id="GO:0005524">
    <property type="term" value="F:ATP binding"/>
    <property type="evidence" value="ECO:0007669"/>
    <property type="project" value="UniProtKB-UniRule"/>
</dbReference>
<dbReference type="GO" id="GO:0004721">
    <property type="term" value="F:phosphoprotein phosphatase activity"/>
    <property type="evidence" value="ECO:0007669"/>
    <property type="project" value="UniProtKB-KW"/>
</dbReference>
<dbReference type="GO" id="GO:0004674">
    <property type="term" value="F:protein serine/threonine kinase activity"/>
    <property type="evidence" value="ECO:0007669"/>
    <property type="project" value="UniProtKB-KW"/>
</dbReference>
<dbReference type="GO" id="GO:0006006">
    <property type="term" value="P:glucose metabolic process"/>
    <property type="evidence" value="ECO:0007669"/>
    <property type="project" value="InterPro"/>
</dbReference>
<dbReference type="GO" id="GO:0006097">
    <property type="term" value="P:glyoxylate cycle"/>
    <property type="evidence" value="ECO:0007669"/>
    <property type="project" value="UniProtKB-UniRule"/>
</dbReference>
<dbReference type="GO" id="GO:0006099">
    <property type="term" value="P:tricarboxylic acid cycle"/>
    <property type="evidence" value="ECO:0007669"/>
    <property type="project" value="UniProtKB-UniRule"/>
</dbReference>
<dbReference type="HAMAP" id="MF_00747">
    <property type="entry name" value="AceK"/>
    <property type="match status" value="1"/>
</dbReference>
<dbReference type="InterPro" id="IPR046855">
    <property type="entry name" value="AceK_kinase"/>
</dbReference>
<dbReference type="InterPro" id="IPR046854">
    <property type="entry name" value="AceK_regulatory"/>
</dbReference>
<dbReference type="InterPro" id="IPR010452">
    <property type="entry name" value="Isocitrate_DH_AceK"/>
</dbReference>
<dbReference type="NCBIfam" id="NF002804">
    <property type="entry name" value="PRK02946.1"/>
    <property type="match status" value="1"/>
</dbReference>
<dbReference type="PANTHER" id="PTHR39559">
    <property type="match status" value="1"/>
</dbReference>
<dbReference type="PANTHER" id="PTHR39559:SF1">
    <property type="entry name" value="ISOCITRATE DEHYDROGENASE KINASE_PHOSPHATASE"/>
    <property type="match status" value="1"/>
</dbReference>
<dbReference type="Pfam" id="PF06315">
    <property type="entry name" value="AceK_kinase"/>
    <property type="match status" value="1"/>
</dbReference>
<dbReference type="Pfam" id="PF20423">
    <property type="entry name" value="AceK_regulatory"/>
    <property type="match status" value="1"/>
</dbReference>
<dbReference type="PIRSF" id="PIRSF000719">
    <property type="entry name" value="AceK"/>
    <property type="match status" value="1"/>
</dbReference>
<accession>Q4UPY1</accession>
<feature type="chain" id="PRO_0000259159" description="Isocitrate dehydrogenase kinase/phosphatase">
    <location>
        <begin position="1"/>
        <end position="579"/>
    </location>
</feature>
<feature type="active site" evidence="1">
    <location>
        <position position="380"/>
    </location>
</feature>
<feature type="binding site" evidence="1">
    <location>
        <begin position="324"/>
        <end position="330"/>
    </location>
    <ligand>
        <name>ATP</name>
        <dbReference type="ChEBI" id="CHEBI:30616"/>
    </ligand>
</feature>
<feature type="binding site" evidence="1">
    <location>
        <position position="345"/>
    </location>
    <ligand>
        <name>ATP</name>
        <dbReference type="ChEBI" id="CHEBI:30616"/>
    </ligand>
</feature>
<gene>
    <name evidence="1" type="primary">aceK</name>
    <name type="ordered locus">XC_3852</name>
</gene>
<sequence>MNQQPLPPQSERRALAIGRAVYEAFQDYHAQFSQITARARQRFETRDWSGAREDAVARIALYDHYISECMLRLRAVLLGQAHDRALWMRARTHYAELLTGLIDQELYKTFYNTLTRRYFRTQGVDAQIEFIALDIEPTDAITVPVARHTYAVSPGRLTEMLVRVLGDYPFEVPYAHRTRCAAAIAVRLLDDLAHWGEHPVRSVELLETVFYRERRAYLVGRLFGEHRFSPCVIALVNDDAGLRAEAVLTRRSDVAQLFSNSRSYFQADLTTVGDAVVFLRSLLTHKPIDELYTMLGRAKQGKTERYRTFFRHFQAHPAEQLVHADGTPGMVMVVFTLPSYPLVFKLIRDRFAYPKTMSRAQVEGKYELVFQLDRIGRLLDAQPYRFLRFPKARFSPALLQDLQSSCAMSLSEDGDDVLIALCYVQRRLRPLNLYLREQLPAAAHAAALDYGQAIKDMARNNIFPGDMLLKNFGITRHQRAVFYDYDELCLITECTFRDWPTPTSYEEQMAAEPWFHVGPRDVFPERFALFMGLPSSQLEAVKHMHPELFDPQWWRDLQARLREDDYPDTPPYADAQKLA</sequence>
<proteinExistence type="inferred from homology"/>